<reference key="1">
    <citation type="journal article" date="2001" name="Lancet">
        <title>Whole genome sequencing of meticillin-resistant Staphylococcus aureus.</title>
        <authorList>
            <person name="Kuroda M."/>
            <person name="Ohta T."/>
            <person name="Uchiyama I."/>
            <person name="Baba T."/>
            <person name="Yuzawa H."/>
            <person name="Kobayashi I."/>
            <person name="Cui L."/>
            <person name="Oguchi A."/>
            <person name="Aoki K."/>
            <person name="Nagai Y."/>
            <person name="Lian J.-Q."/>
            <person name="Ito T."/>
            <person name="Kanamori M."/>
            <person name="Matsumaru H."/>
            <person name="Maruyama A."/>
            <person name="Murakami H."/>
            <person name="Hosoyama A."/>
            <person name="Mizutani-Ui Y."/>
            <person name="Takahashi N.K."/>
            <person name="Sawano T."/>
            <person name="Inoue R."/>
            <person name="Kaito C."/>
            <person name="Sekimizu K."/>
            <person name="Hirakawa H."/>
            <person name="Kuhara S."/>
            <person name="Goto S."/>
            <person name="Yabuzaki J."/>
            <person name="Kanehisa M."/>
            <person name="Yamashita A."/>
            <person name="Oshima K."/>
            <person name="Furuya K."/>
            <person name="Yoshino C."/>
            <person name="Shiba T."/>
            <person name="Hattori M."/>
            <person name="Ogasawara N."/>
            <person name="Hayashi H."/>
            <person name="Hiramatsu K."/>
        </authorList>
    </citation>
    <scope>NUCLEOTIDE SEQUENCE [LARGE SCALE GENOMIC DNA]</scope>
    <source>
        <strain>N315</strain>
    </source>
</reference>
<reference key="2">
    <citation type="submission" date="2007-10" db="UniProtKB">
        <title>Shotgun proteomic analysis of total and membrane protein extracts of S. aureus strain N315.</title>
        <authorList>
            <person name="Vaezzadeh A.R."/>
            <person name="Deshusses J."/>
            <person name="Lescuyer P."/>
            <person name="Hochstrasser D.F."/>
        </authorList>
    </citation>
    <scope>IDENTIFICATION BY MASS SPECTROMETRY [LARGE SCALE ANALYSIS]</scope>
    <source>
        <strain>N315</strain>
    </source>
</reference>
<proteinExistence type="evidence at protein level"/>
<feature type="chain" id="PRO_0000140512" description="Delta-aminolevulinic acid dehydratase">
    <location>
        <begin position="1"/>
        <end position="324"/>
    </location>
</feature>
<feature type="active site" description="Schiff-base intermediate with substrate" evidence="1">
    <location>
        <position position="195"/>
    </location>
</feature>
<feature type="active site" description="Schiff-base intermediate with substrate" evidence="1">
    <location>
        <position position="248"/>
    </location>
</feature>
<feature type="binding site" evidence="1">
    <location>
        <position position="118"/>
    </location>
    <ligand>
        <name>Zn(2+)</name>
        <dbReference type="ChEBI" id="CHEBI:29105"/>
        <note>catalytic</note>
    </ligand>
</feature>
<feature type="binding site" evidence="1">
    <location>
        <position position="120"/>
    </location>
    <ligand>
        <name>Zn(2+)</name>
        <dbReference type="ChEBI" id="CHEBI:29105"/>
        <note>catalytic</note>
    </ligand>
</feature>
<feature type="binding site" evidence="1">
    <location>
        <position position="128"/>
    </location>
    <ligand>
        <name>Zn(2+)</name>
        <dbReference type="ChEBI" id="CHEBI:29105"/>
        <note>catalytic</note>
    </ligand>
</feature>
<feature type="binding site" evidence="1">
    <location>
        <position position="205"/>
    </location>
    <ligand>
        <name>5-aminolevulinate</name>
        <dbReference type="ChEBI" id="CHEBI:356416"/>
        <label>1</label>
    </ligand>
</feature>
<feature type="binding site" evidence="1">
    <location>
        <position position="217"/>
    </location>
    <ligand>
        <name>5-aminolevulinate</name>
        <dbReference type="ChEBI" id="CHEBI:356416"/>
        <label>1</label>
    </ligand>
</feature>
<feature type="binding site" evidence="1">
    <location>
        <position position="233"/>
    </location>
    <ligand>
        <name>Mg(2+)</name>
        <dbReference type="ChEBI" id="CHEBI:18420"/>
    </ligand>
</feature>
<feature type="binding site" evidence="1">
    <location>
        <position position="274"/>
    </location>
    <ligand>
        <name>5-aminolevulinate</name>
        <dbReference type="ChEBI" id="CHEBI:356416"/>
        <label>2</label>
    </ligand>
</feature>
<feature type="binding site" evidence="1">
    <location>
        <position position="313"/>
    </location>
    <ligand>
        <name>5-aminolevulinate</name>
        <dbReference type="ChEBI" id="CHEBI:356416"/>
        <label>2</label>
    </ligand>
</feature>
<accession>P64334</accession>
<accession>Q99TJ3</accession>
<sequence>MKFDRHRRLRSSATMRDMVRENHVRKEDLIYPIFVVEKDDVKKEIKSLPGVYQISLNLLESELKEAYDLGIRAIMFFGVPNSKDDIGTGAYIHDGVIQQATRIAKKMYDDLLIVADTCLCEYTDHGHCGVIDDHTHDVDNDKSLPLLVKTAISQVEAGADIIAPSNMMDGFVAEIRRGLDEAGYYNIPIMSYGVKYASSFFGPFRDAADSAPSFGDRKTYQMDPANRLEALRELESDLKEGCDMMIVKPALSYLDIVRDVKNHTNVPVVAYNVSGEYSMTKAAAQNGWIDEERVVMEQMVSMKRAGADMIITYFAKDICRYLDK</sequence>
<name>HEM2_STAAN</name>
<comment type="function">
    <text evidence="1">Catalyzes an early step in the biosynthesis of tetrapyrroles. Binds two molecules of 5-aminolevulinate per subunit, each at a distinct site, and catalyzes their condensation to form porphobilinogen (By similarity).</text>
</comment>
<comment type="catalytic activity">
    <reaction>
        <text>2 5-aminolevulinate = porphobilinogen + 2 H2O + H(+)</text>
        <dbReference type="Rhea" id="RHEA:24064"/>
        <dbReference type="ChEBI" id="CHEBI:15377"/>
        <dbReference type="ChEBI" id="CHEBI:15378"/>
        <dbReference type="ChEBI" id="CHEBI:58126"/>
        <dbReference type="ChEBI" id="CHEBI:356416"/>
        <dbReference type="EC" id="4.2.1.24"/>
    </reaction>
</comment>
<comment type="cofactor">
    <cofactor evidence="1">
        <name>Zn(2+)</name>
        <dbReference type="ChEBI" id="CHEBI:29105"/>
    </cofactor>
    <text evidence="1">Binds 1 zinc ion per monomer.</text>
</comment>
<comment type="pathway">
    <text>Porphyrin-containing compound metabolism; protoporphyrin-IX biosynthesis; coproporphyrinogen-III from 5-aminolevulinate: step 1/4.</text>
</comment>
<comment type="subunit">
    <text evidence="1">Homooctamer.</text>
</comment>
<comment type="similarity">
    <text evidence="2">Belongs to the ALAD family.</text>
</comment>
<gene>
    <name type="primary">hemB</name>
    <name type="ordered locus">SA1492</name>
</gene>
<evidence type="ECO:0000250" key="1"/>
<evidence type="ECO:0000305" key="2"/>
<dbReference type="EC" id="4.2.1.24"/>
<dbReference type="EMBL" id="BA000018">
    <property type="protein sequence ID" value="BAB42759.1"/>
    <property type="molecule type" value="Genomic_DNA"/>
</dbReference>
<dbReference type="PIR" id="B89950">
    <property type="entry name" value="B89950"/>
</dbReference>
<dbReference type="RefSeq" id="WP_000667126.1">
    <property type="nucleotide sequence ID" value="NC_002745.2"/>
</dbReference>
<dbReference type="SMR" id="P64334"/>
<dbReference type="EnsemblBacteria" id="BAB42759">
    <property type="protein sequence ID" value="BAB42759"/>
    <property type="gene ID" value="BAB42759"/>
</dbReference>
<dbReference type="KEGG" id="sau:SA1492"/>
<dbReference type="HOGENOM" id="CLU_035731_0_0_9"/>
<dbReference type="UniPathway" id="UPA00251">
    <property type="reaction ID" value="UER00318"/>
</dbReference>
<dbReference type="GO" id="GO:0005829">
    <property type="term" value="C:cytosol"/>
    <property type="evidence" value="ECO:0007669"/>
    <property type="project" value="TreeGrafter"/>
</dbReference>
<dbReference type="GO" id="GO:0004655">
    <property type="term" value="F:porphobilinogen synthase activity"/>
    <property type="evidence" value="ECO:0007669"/>
    <property type="project" value="UniProtKB-EC"/>
</dbReference>
<dbReference type="GO" id="GO:0008270">
    <property type="term" value="F:zinc ion binding"/>
    <property type="evidence" value="ECO:0007669"/>
    <property type="project" value="TreeGrafter"/>
</dbReference>
<dbReference type="GO" id="GO:0006782">
    <property type="term" value="P:protoporphyrinogen IX biosynthetic process"/>
    <property type="evidence" value="ECO:0007669"/>
    <property type="project" value="UniProtKB-UniPathway"/>
</dbReference>
<dbReference type="CDD" id="cd00384">
    <property type="entry name" value="ALAD_PBGS"/>
    <property type="match status" value="1"/>
</dbReference>
<dbReference type="FunFam" id="3.20.20.70:FF:000019">
    <property type="entry name" value="Delta-aminolevulinic acid dehydratase"/>
    <property type="match status" value="1"/>
</dbReference>
<dbReference type="Gene3D" id="3.20.20.70">
    <property type="entry name" value="Aldolase class I"/>
    <property type="match status" value="1"/>
</dbReference>
<dbReference type="InterPro" id="IPR001731">
    <property type="entry name" value="ALAD"/>
</dbReference>
<dbReference type="InterPro" id="IPR030656">
    <property type="entry name" value="ALAD_AS"/>
</dbReference>
<dbReference type="InterPro" id="IPR013785">
    <property type="entry name" value="Aldolase_TIM"/>
</dbReference>
<dbReference type="NCBIfam" id="NF006762">
    <property type="entry name" value="PRK09283.1"/>
    <property type="match status" value="1"/>
</dbReference>
<dbReference type="PANTHER" id="PTHR11458">
    <property type="entry name" value="DELTA-AMINOLEVULINIC ACID DEHYDRATASE"/>
    <property type="match status" value="1"/>
</dbReference>
<dbReference type="PANTHER" id="PTHR11458:SF0">
    <property type="entry name" value="DELTA-AMINOLEVULINIC ACID DEHYDRATASE"/>
    <property type="match status" value="1"/>
</dbReference>
<dbReference type="Pfam" id="PF00490">
    <property type="entry name" value="ALAD"/>
    <property type="match status" value="1"/>
</dbReference>
<dbReference type="PIRSF" id="PIRSF001415">
    <property type="entry name" value="Porphbilin_synth"/>
    <property type="match status" value="1"/>
</dbReference>
<dbReference type="PRINTS" id="PR00144">
    <property type="entry name" value="DALDHYDRTASE"/>
</dbReference>
<dbReference type="SMART" id="SM01004">
    <property type="entry name" value="ALAD"/>
    <property type="match status" value="1"/>
</dbReference>
<dbReference type="SUPFAM" id="SSF51569">
    <property type="entry name" value="Aldolase"/>
    <property type="match status" value="1"/>
</dbReference>
<dbReference type="PROSITE" id="PS00169">
    <property type="entry name" value="D_ALA_DEHYDRATASE"/>
    <property type="match status" value="1"/>
</dbReference>
<protein>
    <recommendedName>
        <fullName>Delta-aminolevulinic acid dehydratase</fullName>
        <shortName>ALAD</shortName>
        <shortName>ALADH</shortName>
        <ecNumber>4.2.1.24</ecNumber>
    </recommendedName>
    <alternativeName>
        <fullName>Porphobilinogen synthase</fullName>
    </alternativeName>
</protein>
<keyword id="KW-0350">Heme biosynthesis</keyword>
<keyword id="KW-0456">Lyase</keyword>
<keyword id="KW-0460">Magnesium</keyword>
<keyword id="KW-0479">Metal-binding</keyword>
<keyword id="KW-0627">Porphyrin biosynthesis</keyword>
<keyword id="KW-0862">Zinc</keyword>
<organism>
    <name type="scientific">Staphylococcus aureus (strain N315)</name>
    <dbReference type="NCBI Taxonomy" id="158879"/>
    <lineage>
        <taxon>Bacteria</taxon>
        <taxon>Bacillati</taxon>
        <taxon>Bacillota</taxon>
        <taxon>Bacilli</taxon>
        <taxon>Bacillales</taxon>
        <taxon>Staphylococcaceae</taxon>
        <taxon>Staphylococcus</taxon>
    </lineage>
</organism>